<feature type="chain" id="PRO_0000099958" description="Ketoisovalerate oxidoreductase subunit VorB">
    <location>
        <begin position="1"/>
        <end position="311"/>
    </location>
</feature>
<gene>
    <name type="primary">vorB</name>
    <name type="ordered locus">PH0681</name>
</gene>
<dbReference type="EC" id="1.2.7.7"/>
<dbReference type="EMBL" id="BA000001">
    <property type="protein sequence ID" value="BAA29772.1"/>
    <property type="status" value="ALT_INIT"/>
    <property type="molecule type" value="Genomic_DNA"/>
</dbReference>
<dbReference type="PIR" id="B71114">
    <property type="entry name" value="B71114"/>
</dbReference>
<dbReference type="RefSeq" id="WP_048053190.1">
    <property type="nucleotide sequence ID" value="NC_000961.1"/>
</dbReference>
<dbReference type="SMR" id="O58414"/>
<dbReference type="STRING" id="70601.gene:9377626"/>
<dbReference type="EnsemblBacteria" id="BAA29772">
    <property type="protein sequence ID" value="BAA29772"/>
    <property type="gene ID" value="BAA29772"/>
</dbReference>
<dbReference type="GeneID" id="1443009"/>
<dbReference type="KEGG" id="pho:PH0681"/>
<dbReference type="eggNOG" id="arCOG01601">
    <property type="taxonomic scope" value="Archaea"/>
</dbReference>
<dbReference type="OrthoDB" id="296931at2157"/>
<dbReference type="Proteomes" id="UP000000752">
    <property type="component" value="Chromosome"/>
</dbReference>
<dbReference type="GO" id="GO:0043807">
    <property type="term" value="F:3-methyl-2-oxobutanoate dehydrogenase (ferredoxin) activity"/>
    <property type="evidence" value="ECO:0007669"/>
    <property type="project" value="UniProtKB-EC"/>
</dbReference>
<dbReference type="GO" id="GO:0030976">
    <property type="term" value="F:thiamine pyrophosphate binding"/>
    <property type="evidence" value="ECO:0007669"/>
    <property type="project" value="InterPro"/>
</dbReference>
<dbReference type="GO" id="GO:0006082">
    <property type="term" value="P:organic acid metabolic process"/>
    <property type="evidence" value="ECO:0007669"/>
    <property type="project" value="UniProtKB-ARBA"/>
</dbReference>
<dbReference type="GO" id="GO:0044272">
    <property type="term" value="P:sulfur compound biosynthetic process"/>
    <property type="evidence" value="ECO:0007669"/>
    <property type="project" value="UniProtKB-ARBA"/>
</dbReference>
<dbReference type="CDD" id="cd03376">
    <property type="entry name" value="TPP_PFOR_porB_like"/>
    <property type="match status" value="1"/>
</dbReference>
<dbReference type="Gene3D" id="3.40.50.970">
    <property type="match status" value="2"/>
</dbReference>
<dbReference type="InterPro" id="IPR051479">
    <property type="entry name" value="PorB-like"/>
</dbReference>
<dbReference type="InterPro" id="IPR029061">
    <property type="entry name" value="THDP-binding"/>
</dbReference>
<dbReference type="InterPro" id="IPR011766">
    <property type="entry name" value="TPP_enzyme_TPP-bd"/>
</dbReference>
<dbReference type="NCBIfam" id="NF008818">
    <property type="entry name" value="PRK11864.1"/>
    <property type="match status" value="1"/>
</dbReference>
<dbReference type="PANTHER" id="PTHR42897">
    <property type="entry name" value="PYRUVATE SYNTHASE SUBUNIT PORB"/>
    <property type="match status" value="1"/>
</dbReference>
<dbReference type="PANTHER" id="PTHR42897:SF2">
    <property type="entry name" value="PYRUVATE SYNTHASE SUBUNIT PORB"/>
    <property type="match status" value="1"/>
</dbReference>
<dbReference type="Pfam" id="PF02775">
    <property type="entry name" value="TPP_enzyme_C"/>
    <property type="match status" value="1"/>
</dbReference>
<dbReference type="SUPFAM" id="SSF52518">
    <property type="entry name" value="Thiamin diphosphate-binding fold (THDP-binding)"/>
    <property type="match status" value="1"/>
</dbReference>
<sequence>MEIPEEVKKRLTIPFEENFFAGHTACQGCGASLGLRYVLKAYGRKTIVVIPACCSTIIAGPWPYSALNANLFHTAFATTGAVISGIEAGLKALGYKVKGEDGIMVVGWAGDGGTADIGLQALSGFIERGHDAVYIMYDNEAYMNTGIQRSSSTPYGAWTTNTPGGKRHLLEKRHKKKVIDIVIAHRIPYAATASVAYPEDFIRKLKKAQKIPGPSFIQLFAPCPTGWRAPTDKSIEIARLAVQTAYFPLFEYENGKYKINMPNPKKEPKPIEEFLKLQGRFKYMTKEDVEALQKWVLEEWERLKKLAEVFG</sequence>
<accession>O58414</accession>
<proteinExistence type="inferred from homology"/>
<evidence type="ECO:0000250" key="1"/>
<evidence type="ECO:0000305" key="2"/>
<name>VORB_PYRHO</name>
<comment type="catalytic activity">
    <reaction>
        <text>3-methyl-2-oxobutanoate + 2 oxidized [2Fe-2S]-[ferredoxin] + CoA = 2-methylpropanoyl-CoA + 2 reduced [2Fe-2S]-[ferredoxin] + CO2 + H(+)</text>
        <dbReference type="Rhea" id="RHEA:11712"/>
        <dbReference type="Rhea" id="RHEA-COMP:10000"/>
        <dbReference type="Rhea" id="RHEA-COMP:10001"/>
        <dbReference type="ChEBI" id="CHEBI:11851"/>
        <dbReference type="ChEBI" id="CHEBI:15378"/>
        <dbReference type="ChEBI" id="CHEBI:16526"/>
        <dbReference type="ChEBI" id="CHEBI:33737"/>
        <dbReference type="ChEBI" id="CHEBI:33738"/>
        <dbReference type="ChEBI" id="CHEBI:57287"/>
        <dbReference type="ChEBI" id="CHEBI:57338"/>
        <dbReference type="EC" id="1.2.7.7"/>
    </reaction>
</comment>
<comment type="subunit">
    <text evidence="1">Heterotetramer of one alpha, one beta, one delta and one gamma chain.</text>
</comment>
<comment type="sequence caution" evidence="2">
    <conflict type="erroneous initiation">
        <sequence resource="EMBL-CDS" id="BAA29772"/>
    </conflict>
</comment>
<reference key="1">
    <citation type="journal article" date="1998" name="DNA Res.">
        <title>Complete sequence and gene organization of the genome of a hyper-thermophilic archaebacterium, Pyrococcus horikoshii OT3.</title>
        <authorList>
            <person name="Kawarabayasi Y."/>
            <person name="Sawada M."/>
            <person name="Horikawa H."/>
            <person name="Haikawa Y."/>
            <person name="Hino Y."/>
            <person name="Yamamoto S."/>
            <person name="Sekine M."/>
            <person name="Baba S."/>
            <person name="Kosugi H."/>
            <person name="Hosoyama A."/>
            <person name="Nagai Y."/>
            <person name="Sakai M."/>
            <person name="Ogura K."/>
            <person name="Otsuka R."/>
            <person name="Nakazawa H."/>
            <person name="Takamiya M."/>
            <person name="Ohfuku Y."/>
            <person name="Funahashi T."/>
            <person name="Tanaka T."/>
            <person name="Kudoh Y."/>
            <person name="Yamazaki J."/>
            <person name="Kushida N."/>
            <person name="Oguchi A."/>
            <person name="Aoki K."/>
            <person name="Yoshizawa T."/>
            <person name="Nakamura Y."/>
            <person name="Robb F.T."/>
            <person name="Horikoshi K."/>
            <person name="Masuchi Y."/>
            <person name="Shizuya H."/>
            <person name="Kikuchi H."/>
        </authorList>
    </citation>
    <scope>NUCLEOTIDE SEQUENCE [LARGE SCALE GENOMIC DNA]</scope>
    <source>
        <strain>ATCC 700860 / DSM 12428 / JCM 9974 / NBRC 100139 / OT-3</strain>
    </source>
</reference>
<protein>
    <recommendedName>
        <fullName>Ketoisovalerate oxidoreductase subunit VorB</fullName>
        <shortName>VOR</shortName>
        <ecNumber>1.2.7.7</ecNumber>
    </recommendedName>
    <alternativeName>
        <fullName>2-oxoisovalerate ferredoxin reductase subunit beta</fullName>
    </alternativeName>
    <alternativeName>
        <fullName>2-oxoisovalerate oxidoreductase beta chain</fullName>
    </alternativeName>
</protein>
<keyword id="KW-0560">Oxidoreductase</keyword>
<organism>
    <name type="scientific">Pyrococcus horikoshii (strain ATCC 700860 / DSM 12428 / JCM 9974 / NBRC 100139 / OT-3)</name>
    <dbReference type="NCBI Taxonomy" id="70601"/>
    <lineage>
        <taxon>Archaea</taxon>
        <taxon>Methanobacteriati</taxon>
        <taxon>Methanobacteriota</taxon>
        <taxon>Thermococci</taxon>
        <taxon>Thermococcales</taxon>
        <taxon>Thermococcaceae</taxon>
        <taxon>Pyrococcus</taxon>
    </lineage>
</organism>